<dbReference type="EMBL" id="Y17968">
    <property type="protein sequence ID" value="CAA76978.1"/>
    <property type="molecule type" value="mRNA"/>
</dbReference>
<dbReference type="EMBL" id="AJ851648">
    <property type="protein sequence ID" value="CAH65282.1"/>
    <property type="molecule type" value="mRNA"/>
</dbReference>
<dbReference type="EMBL" id="AF178849">
    <property type="protein sequence ID" value="AAD52670.1"/>
    <property type="molecule type" value="Genomic_DNA"/>
</dbReference>
<dbReference type="EMBL" id="AADN03000868">
    <property type="status" value="NOT_ANNOTATED_CDS"/>
    <property type="molecule type" value="Genomic_DNA"/>
</dbReference>
<dbReference type="EMBL" id="AADN03001640">
    <property type="status" value="NOT_ANNOTATED_CDS"/>
    <property type="molecule type" value="Genomic_DNA"/>
</dbReference>
<dbReference type="EMBL" id="JQ040530">
    <property type="protein sequence ID" value="AFD33645.1"/>
    <property type="molecule type" value="mRNA"/>
</dbReference>
<dbReference type="RefSeq" id="NP_990233.1">
    <property type="nucleotide sequence ID" value="NM_204902.2"/>
</dbReference>
<dbReference type="RefSeq" id="XP_015133153.1">
    <property type="nucleotide sequence ID" value="XM_015277667.4"/>
</dbReference>
<dbReference type="RefSeq" id="XP_015133156.1">
    <property type="nucleotide sequence ID" value="XM_015277670.3"/>
</dbReference>
<dbReference type="RefSeq" id="XP_040509225.1">
    <property type="nucleotide sequence ID" value="XM_040653291.2"/>
</dbReference>
<dbReference type="RefSeq" id="XP_040509281.1">
    <property type="nucleotide sequence ID" value="XM_040653347.2"/>
</dbReference>
<dbReference type="RefSeq" id="XP_046762652.1">
    <property type="nucleotide sequence ID" value="XM_046906696.1"/>
</dbReference>
<dbReference type="RefSeq" id="XP_046762654.1">
    <property type="nucleotide sequence ID" value="XM_046906698.1"/>
</dbReference>
<dbReference type="RefSeq" id="XP_046762655.1">
    <property type="nucleotide sequence ID" value="XM_046906699.1"/>
</dbReference>
<dbReference type="RefSeq" id="XP_046762656.1">
    <property type="nucleotide sequence ID" value="XM_046906700.1"/>
</dbReference>
<dbReference type="RefSeq" id="XP_046762657.1">
    <property type="nucleotide sequence ID" value="XM_046906701.1"/>
</dbReference>
<dbReference type="RefSeq" id="XP_046763166.1">
    <property type="nucleotide sequence ID" value="XM_046907210.1"/>
</dbReference>
<dbReference type="SMR" id="Q9YH06"/>
<dbReference type="FunCoup" id="Q9YH06">
    <property type="interactions" value="1498"/>
</dbReference>
<dbReference type="STRING" id="9031.ENSGALP00000074061"/>
<dbReference type="PaxDb" id="9031-ENSGALP00000027541"/>
<dbReference type="Ensembl" id="ENSGALT00010016643.1">
    <property type="protein sequence ID" value="ENSGALP00010009408.1"/>
    <property type="gene ID" value="ENSGALG00010007011.1"/>
</dbReference>
<dbReference type="GeneID" id="395724"/>
<dbReference type="KEGG" id="gga:395724"/>
<dbReference type="CTD" id="3146"/>
<dbReference type="VEuPathDB" id="HostDB:geneid_395724"/>
<dbReference type="eggNOG" id="KOG0381">
    <property type="taxonomic scope" value="Eukaryota"/>
</dbReference>
<dbReference type="GeneTree" id="ENSGT00950000183120"/>
<dbReference type="HOGENOM" id="CLU_082854_0_0_1"/>
<dbReference type="InParanoid" id="Q9YH06"/>
<dbReference type="PhylomeDB" id="Q9YH06"/>
<dbReference type="TreeFam" id="TF105371"/>
<dbReference type="Reactome" id="R-GGA-140342">
    <property type="pathway name" value="Apoptosis induced DNA fragmentation"/>
</dbReference>
<dbReference type="Reactome" id="R-GGA-5620971">
    <property type="pathway name" value="Pyroptosis"/>
</dbReference>
<dbReference type="Reactome" id="R-GGA-5686938">
    <property type="pathway name" value="Regulation of TLR by endogenous ligand"/>
</dbReference>
<dbReference type="Reactome" id="R-GGA-6798695">
    <property type="pathway name" value="Neutrophil degranulation"/>
</dbReference>
<dbReference type="PRO" id="PR:Q9YH06"/>
<dbReference type="Proteomes" id="UP000000539">
    <property type="component" value="Chromosome 1"/>
</dbReference>
<dbReference type="Bgee" id="ENSGALG00000042875">
    <property type="expression patterns" value="Expressed in spermatid and 14 other cell types or tissues"/>
</dbReference>
<dbReference type="GO" id="GO:0005694">
    <property type="term" value="C:chromosome"/>
    <property type="evidence" value="ECO:0007669"/>
    <property type="project" value="UniProtKB-SubCell"/>
</dbReference>
<dbReference type="GO" id="GO:0005737">
    <property type="term" value="C:cytoplasm"/>
    <property type="evidence" value="ECO:0007669"/>
    <property type="project" value="UniProtKB-SubCell"/>
</dbReference>
<dbReference type="GO" id="GO:0005576">
    <property type="term" value="C:extracellular region"/>
    <property type="evidence" value="ECO:0007669"/>
    <property type="project" value="UniProtKB-SubCell"/>
</dbReference>
<dbReference type="GO" id="GO:0005634">
    <property type="term" value="C:nucleus"/>
    <property type="evidence" value="ECO:0007669"/>
    <property type="project" value="UniProtKB-SubCell"/>
</dbReference>
<dbReference type="GO" id="GO:0000405">
    <property type="term" value="F:bubble DNA binding"/>
    <property type="evidence" value="ECO:0000314"/>
    <property type="project" value="AgBase"/>
</dbReference>
<dbReference type="GO" id="GO:0008301">
    <property type="term" value="F:DNA binding, bending"/>
    <property type="evidence" value="ECO:0000314"/>
    <property type="project" value="AgBase"/>
</dbReference>
<dbReference type="GO" id="GO:0000400">
    <property type="term" value="F:four-way junction DNA binding"/>
    <property type="evidence" value="ECO:0000314"/>
    <property type="project" value="AgBase"/>
</dbReference>
<dbReference type="GO" id="GO:0044378">
    <property type="term" value="F:non-sequence-specific DNA binding, bending"/>
    <property type="evidence" value="ECO:0000250"/>
    <property type="project" value="AgBase"/>
</dbReference>
<dbReference type="GO" id="GO:0097100">
    <property type="term" value="F:supercoiled DNA binding"/>
    <property type="evidence" value="ECO:0000314"/>
    <property type="project" value="AgBase"/>
</dbReference>
<dbReference type="GO" id="GO:0032392">
    <property type="term" value="P:DNA geometric change"/>
    <property type="evidence" value="ECO:0000314"/>
    <property type="project" value="AgBase"/>
</dbReference>
<dbReference type="GO" id="GO:0006954">
    <property type="term" value="P:inflammatory response"/>
    <property type="evidence" value="ECO:0007669"/>
    <property type="project" value="UniProtKB-KW"/>
</dbReference>
<dbReference type="GO" id="GO:0045087">
    <property type="term" value="P:innate immune response"/>
    <property type="evidence" value="ECO:0007669"/>
    <property type="project" value="UniProtKB-KW"/>
</dbReference>
<dbReference type="GO" id="GO:0006357">
    <property type="term" value="P:regulation of transcription by RNA polymerase II"/>
    <property type="evidence" value="ECO:0000318"/>
    <property type="project" value="GO_Central"/>
</dbReference>
<dbReference type="CDD" id="cd21978">
    <property type="entry name" value="HMG-box_HMGB_rpt1"/>
    <property type="match status" value="1"/>
</dbReference>
<dbReference type="CDD" id="cd21979">
    <property type="entry name" value="HMG-box_HMGB_rpt2"/>
    <property type="match status" value="1"/>
</dbReference>
<dbReference type="FunFam" id="1.10.30.10:FF:000006">
    <property type="entry name" value="High mobility group protein B1"/>
    <property type="match status" value="1"/>
</dbReference>
<dbReference type="FunFam" id="1.10.30.10:FF:000015">
    <property type="entry name" value="high mobility group protein B1"/>
    <property type="match status" value="1"/>
</dbReference>
<dbReference type="Gene3D" id="1.10.30.10">
    <property type="entry name" value="High mobility group box domain"/>
    <property type="match status" value="2"/>
</dbReference>
<dbReference type="InterPro" id="IPR009071">
    <property type="entry name" value="HMG_box_dom"/>
</dbReference>
<dbReference type="InterPro" id="IPR036910">
    <property type="entry name" value="HMG_box_dom_sf"/>
</dbReference>
<dbReference type="InterPro" id="IPR017967">
    <property type="entry name" value="HMG_boxA_CS"/>
</dbReference>
<dbReference type="InterPro" id="IPR050342">
    <property type="entry name" value="HMGB"/>
</dbReference>
<dbReference type="PANTHER" id="PTHR48112:SF12">
    <property type="entry name" value="HIGH MOBILITY GROUP PROTEIN B1-LIKE 1-RELATED"/>
    <property type="match status" value="1"/>
</dbReference>
<dbReference type="PANTHER" id="PTHR48112">
    <property type="entry name" value="HIGH MOBILITY GROUP PROTEIN DSP1"/>
    <property type="match status" value="1"/>
</dbReference>
<dbReference type="Pfam" id="PF00505">
    <property type="entry name" value="HMG_box"/>
    <property type="match status" value="1"/>
</dbReference>
<dbReference type="Pfam" id="PF09011">
    <property type="entry name" value="HMG_box_2"/>
    <property type="match status" value="1"/>
</dbReference>
<dbReference type="PRINTS" id="PR00886">
    <property type="entry name" value="HIGHMOBLTY12"/>
</dbReference>
<dbReference type="SMART" id="SM00398">
    <property type="entry name" value="HMG"/>
    <property type="match status" value="2"/>
</dbReference>
<dbReference type="SUPFAM" id="SSF47095">
    <property type="entry name" value="HMG-box"/>
    <property type="match status" value="2"/>
</dbReference>
<dbReference type="PROSITE" id="PS00353">
    <property type="entry name" value="HMG_BOX_1"/>
    <property type="match status" value="1"/>
</dbReference>
<dbReference type="PROSITE" id="PS50118">
    <property type="entry name" value="HMG_BOX_2"/>
    <property type="match status" value="2"/>
</dbReference>
<feature type="initiator methionine" description="Removed" evidence="2">
    <location>
        <position position="1"/>
    </location>
</feature>
<feature type="chain" id="PRO_0000423460" description="High mobility group protein B1">
    <location>
        <begin position="2"/>
        <end position="215"/>
    </location>
</feature>
<feature type="DNA-binding region" description="HMG box 1" evidence="5">
    <location>
        <begin position="9"/>
        <end position="79"/>
    </location>
</feature>
<feature type="DNA-binding region" description="HMG box 2" evidence="5">
    <location>
        <begin position="95"/>
        <end position="163"/>
    </location>
</feature>
<feature type="region of interest" description="NLS 1" evidence="4">
    <location>
        <begin position="27"/>
        <end position="43"/>
    </location>
</feature>
<feature type="region of interest" description="Disordered" evidence="6">
    <location>
        <begin position="75"/>
        <end position="95"/>
    </location>
</feature>
<feature type="region of interest" description="Disordered" evidence="6">
    <location>
        <begin position="166"/>
        <end position="215"/>
    </location>
</feature>
<feature type="region of interest" description="NLS 2" evidence="4">
    <location>
        <begin position="178"/>
        <end position="184"/>
    </location>
</feature>
<feature type="region of interest" description="Involved in intramolecular interaction with K-3">
    <location>
        <begin position="196"/>
        <end position="210"/>
    </location>
</feature>
<feature type="region of interest" description="Involved in interaction with histone H3">
    <location>
        <begin position="211"/>
        <end position="215"/>
    </location>
</feature>
<feature type="short sequence motif" description="Nuclear localization signal (NLS) 1" evidence="4">
    <location>
        <begin position="27"/>
        <end position="43"/>
    </location>
</feature>
<feature type="short sequence motif" description="Nuclear localization signal (NLS) 2" evidence="4">
    <location>
        <begin position="178"/>
        <end position="184"/>
    </location>
</feature>
<feature type="compositionally biased region" description="Basic and acidic residues" evidence="6">
    <location>
        <begin position="83"/>
        <end position="94"/>
    </location>
</feature>
<feature type="compositionally biased region" description="Basic and acidic residues" evidence="6">
    <location>
        <begin position="166"/>
        <end position="179"/>
    </location>
</feature>
<feature type="compositionally biased region" description="Acidic residues" evidence="6">
    <location>
        <begin position="187"/>
        <end position="215"/>
    </location>
</feature>
<feature type="site" description="Involved in intramolecular interaction with the C-terminal acidic tail">
    <location>
        <position position="3"/>
    </location>
</feature>
<feature type="modified residue" description="Cysteine sulfonic acid (-SO3H); alternate" evidence="4">
    <location>
        <position position="23"/>
    </location>
</feature>
<feature type="modified residue" description="Cysteine sulfonic acid (-SO3H); alternate" evidence="4">
    <location>
        <position position="45"/>
    </location>
</feature>
<feature type="modified residue" description="Cysteine sulfonic acid (-SO3H)" evidence="4">
    <location>
        <position position="106"/>
    </location>
</feature>
<feature type="disulfide bond" description="In disulfide HMGB1" evidence="4">
    <location>
        <begin position="23"/>
        <end position="45"/>
    </location>
</feature>
<feature type="mutagenesis site" description="Impairs binding to distorted DNA; when associated with A-12." evidence="7">
    <original>K</original>
    <variation>A</variation>
    <location>
        <position position="3"/>
    </location>
</feature>
<feature type="mutagenesis site" description="Impairs binding to distorted DNA; when associated with A-3." evidence="7">
    <original>K</original>
    <variation>A</variation>
    <location>
        <position position="12"/>
    </location>
</feature>
<feature type="sequence conflict" description="In Ref. 3; AAD52670." evidence="9" ref="3">
    <location>
        <position position="214"/>
    </location>
</feature>
<protein>
    <recommendedName>
        <fullName>High mobility group protein B1</fullName>
    </recommendedName>
    <alternativeName>
        <fullName>High mobility group protein 1</fullName>
        <shortName>HMG-1</shortName>
    </alternativeName>
</protein>
<accession>Q9YH06</accession>
<accession>H9BNX0</accession>
<accession>Q9PUK9</accession>
<gene>
    <name type="primary">HMGB1</name>
    <name type="synonym">HMG1</name>
    <name type="ORF">RCJMB04_15a21</name>
</gene>
<proteinExistence type="evidence at protein level"/>
<name>HMGB1_CHICK</name>
<sequence length="215" mass="24909">MGKGDPKKPRGKMSSYAFFVQTCREEHKKKHPDASVNFSEFSKKCSERWKTMSSKEKGKFEDMAKADKLRYEKEMKNYVPPKGETKKKFKDPNAPKRPPSAFFLFCSEFRPKIKGEHPGLSIGDVAKKLGEMWNNTAADDKQPYEKKAAKLKEKYEKDIAAYRAKGKVDAGKKVVAKAEKSKKKKEEEEDEDEDEEDEEDEEEEEEEEEDDDDDE</sequence>
<reference key="1">
    <citation type="journal article" date="1998" name="Gene">
        <title>Selection of a cDNA clone for chicken high-mobility-group 1 (HMG1) protein through its unusually conserved 3'-untranslated region, and improved expression of recombinant HMG1 in Escherichia coli.</title>
        <authorList>
            <person name="Lee K.B."/>
            <person name="Brooks D.J."/>
            <person name="Thomas J.O."/>
        </authorList>
    </citation>
    <scope>NUCLEOTIDE SEQUENCE [MRNA]</scope>
    <source>
        <tissue>B-cell</tissue>
    </source>
</reference>
<reference key="2">
    <citation type="journal article" date="2005" name="Genome Biol.">
        <title>Full-length cDNAs from chicken bursal lymphocytes to facilitate gene function analysis.</title>
        <authorList>
            <person name="Caldwell R.B."/>
            <person name="Kierzek A.M."/>
            <person name="Arakawa H."/>
            <person name="Bezzubov Y."/>
            <person name="Zaim J."/>
            <person name="Fiedler P."/>
            <person name="Kutter S."/>
            <person name="Blagodatski A."/>
            <person name="Kostovska D."/>
            <person name="Koter M."/>
            <person name="Plachy J."/>
            <person name="Carninci P."/>
            <person name="Hayashizaki Y."/>
            <person name="Buerstedde J.-M."/>
        </authorList>
    </citation>
    <scope>NUCLEOTIDE SEQUENCE [LARGE SCALE MRNA]</scope>
    <source>
        <strain>CB</strain>
        <tissue>Bursa of Fabricius</tissue>
    </source>
</reference>
<reference key="3">
    <citation type="journal article" date="2000" name="Biochim. Biophys. Acta">
        <title>The chicken genome contains no HMG1 retropseudogenes but a functional HMG1 gene with long introns.</title>
        <authorList>
            <person name="Lum H.K."/>
            <person name="Lee K.D."/>
            <person name="Yu G."/>
        </authorList>
    </citation>
    <scope>NUCLEOTIDE SEQUENCE [GENOMIC DNA]</scope>
</reference>
<reference key="4">
    <citation type="journal article" date="2004" name="Nature">
        <title>Sequence and comparative analysis of the chicken genome provide unique perspectives on vertebrate evolution.</title>
        <authorList>
            <person name="Hillier L.W."/>
            <person name="Miller W."/>
            <person name="Birney E."/>
            <person name="Warren W."/>
            <person name="Hardison R.C."/>
            <person name="Ponting C.P."/>
            <person name="Bork P."/>
            <person name="Burt D.W."/>
            <person name="Groenen M.A.M."/>
            <person name="Delany M.E."/>
            <person name="Dodgson J.B."/>
            <person name="Chinwalla A.T."/>
            <person name="Cliften P.F."/>
            <person name="Clifton S.W."/>
            <person name="Delehaunty K.D."/>
            <person name="Fronick C."/>
            <person name="Fulton R.S."/>
            <person name="Graves T.A."/>
            <person name="Kremitzki C."/>
            <person name="Layman D."/>
            <person name="Magrini V."/>
            <person name="McPherson J.D."/>
            <person name="Miner T.L."/>
            <person name="Minx P."/>
            <person name="Nash W.E."/>
            <person name="Nhan M.N."/>
            <person name="Nelson J.O."/>
            <person name="Oddy L.G."/>
            <person name="Pohl C.S."/>
            <person name="Randall-Maher J."/>
            <person name="Smith S.M."/>
            <person name="Wallis J.W."/>
            <person name="Yang S.-P."/>
            <person name="Romanov M.N."/>
            <person name="Rondelli C.M."/>
            <person name="Paton B."/>
            <person name="Smith J."/>
            <person name="Morrice D."/>
            <person name="Daniels L."/>
            <person name="Tempest H.G."/>
            <person name="Robertson L."/>
            <person name="Masabanda J.S."/>
            <person name="Griffin D.K."/>
            <person name="Vignal A."/>
            <person name="Fillon V."/>
            <person name="Jacobbson L."/>
            <person name="Kerje S."/>
            <person name="Andersson L."/>
            <person name="Crooijmans R.P."/>
            <person name="Aerts J."/>
            <person name="van der Poel J.J."/>
            <person name="Ellegren H."/>
            <person name="Caldwell R.B."/>
            <person name="Hubbard S.J."/>
            <person name="Grafham D.V."/>
            <person name="Kierzek A.M."/>
            <person name="McLaren S.R."/>
            <person name="Overton I.M."/>
            <person name="Arakawa H."/>
            <person name="Beattie K.J."/>
            <person name="Bezzubov Y."/>
            <person name="Boardman P.E."/>
            <person name="Bonfield J.K."/>
            <person name="Croning M.D.R."/>
            <person name="Davies R.M."/>
            <person name="Francis M.D."/>
            <person name="Humphray S.J."/>
            <person name="Scott C.E."/>
            <person name="Taylor R.G."/>
            <person name="Tickle C."/>
            <person name="Brown W.R.A."/>
            <person name="Rogers J."/>
            <person name="Buerstedde J.-M."/>
            <person name="Wilson S.A."/>
            <person name="Stubbs L."/>
            <person name="Ovcharenko I."/>
            <person name="Gordon L."/>
            <person name="Lucas S."/>
            <person name="Miller M.M."/>
            <person name="Inoko H."/>
            <person name="Shiina T."/>
            <person name="Kaufman J."/>
            <person name="Salomonsen J."/>
            <person name="Skjoedt K."/>
            <person name="Wong G.K.-S."/>
            <person name="Wang J."/>
            <person name="Liu B."/>
            <person name="Wang J."/>
            <person name="Yu J."/>
            <person name="Yang H."/>
            <person name="Nefedov M."/>
            <person name="Koriabine M."/>
            <person name="Dejong P.J."/>
            <person name="Goodstadt L."/>
            <person name="Webber C."/>
            <person name="Dickens N.J."/>
            <person name="Letunic I."/>
            <person name="Suyama M."/>
            <person name="Torrents D."/>
            <person name="von Mering C."/>
            <person name="Zdobnov E.M."/>
            <person name="Makova K."/>
            <person name="Nekrutenko A."/>
            <person name="Elnitski L."/>
            <person name="Eswara P."/>
            <person name="King D.C."/>
            <person name="Yang S.-P."/>
            <person name="Tyekucheva S."/>
            <person name="Radakrishnan A."/>
            <person name="Harris R.S."/>
            <person name="Chiaromonte F."/>
            <person name="Taylor J."/>
            <person name="He J."/>
            <person name="Rijnkels M."/>
            <person name="Griffiths-Jones S."/>
            <person name="Ureta-Vidal A."/>
            <person name="Hoffman M.M."/>
            <person name="Severin J."/>
            <person name="Searle S.M.J."/>
            <person name="Law A.S."/>
            <person name="Speed D."/>
            <person name="Waddington D."/>
            <person name="Cheng Z."/>
            <person name="Tuzun E."/>
            <person name="Eichler E."/>
            <person name="Bao Z."/>
            <person name="Flicek P."/>
            <person name="Shteynberg D.D."/>
            <person name="Brent M.R."/>
            <person name="Bye J.M."/>
            <person name="Huckle E.J."/>
            <person name="Chatterji S."/>
            <person name="Dewey C."/>
            <person name="Pachter L."/>
            <person name="Kouranov A."/>
            <person name="Mourelatos Z."/>
            <person name="Hatzigeorgiou A.G."/>
            <person name="Paterson A.H."/>
            <person name="Ivarie R."/>
            <person name="Brandstrom M."/>
            <person name="Axelsson E."/>
            <person name="Backstrom N."/>
            <person name="Berlin S."/>
            <person name="Webster M.T."/>
            <person name="Pourquie O."/>
            <person name="Reymond A."/>
            <person name="Ucla C."/>
            <person name="Antonarakis S.E."/>
            <person name="Long M."/>
            <person name="Emerson J.J."/>
            <person name="Betran E."/>
            <person name="Dupanloup I."/>
            <person name="Kaessmann H."/>
            <person name="Hinrichs A.S."/>
            <person name="Bejerano G."/>
            <person name="Furey T.S."/>
            <person name="Harte R.A."/>
            <person name="Raney B."/>
            <person name="Siepel A."/>
            <person name="Kent W.J."/>
            <person name="Haussler D."/>
            <person name="Eyras E."/>
            <person name="Castelo R."/>
            <person name="Abril J.F."/>
            <person name="Castellano S."/>
            <person name="Camara F."/>
            <person name="Parra G."/>
            <person name="Guigo R."/>
            <person name="Bourque G."/>
            <person name="Tesler G."/>
            <person name="Pevzner P.A."/>
            <person name="Smit A."/>
            <person name="Fulton L.A."/>
            <person name="Mardis E.R."/>
            <person name="Wilson R.K."/>
        </authorList>
    </citation>
    <scope>NUCLEOTIDE SEQUENCE [LARGE SCALE GENOMIC DNA]</scope>
    <source>
        <strain>Red jungle fowl</strain>
    </source>
</reference>
<reference key="5">
    <citation type="submission" date="2011-11" db="EMBL/GenBank/DDBJ databases">
        <authorList>
            <person name="Sawant P.M."/>
            <person name="Dhama K."/>
            <person name="Wani M.Y."/>
            <person name="Upamanyu V."/>
            <person name="Singh S.D."/>
            <person name="Somvanshi R."/>
            <person name="Kumar P."/>
            <person name="Bisla S.R."/>
            <person name="Chaudhary D."/>
            <person name="Bassareddi M."/>
        </authorList>
    </citation>
    <scope>NUCLEOTIDE SEQUENCE [MRNA] OF 1-185</scope>
</reference>
<reference key="6">
    <citation type="journal article" date="2008" name="Biochemistry">
        <title>Distinct domains in HMGB1 are involved in specific intramolecular and nucleosomal interactions.</title>
        <authorList>
            <person name="Kawase T."/>
            <person name="Sato K."/>
            <person name="Ueda T."/>
            <person name="Yoshida M."/>
        </authorList>
    </citation>
    <scope>DOMAIN</scope>
    <scope>SUBCELLULAR LOCATION</scope>
</reference>
<reference key="7">
    <citation type="journal article" date="2008" name="Biochem. J.">
        <title>A critical role in structure-specific DNA binding for the acetylatable lysine residues in HMGB1.</title>
        <authorList>
            <person name="Assenberg R."/>
            <person name="Webb M."/>
            <person name="Connolly E."/>
            <person name="Stott K."/>
            <person name="Watson M."/>
            <person name="Hobbs J."/>
            <person name="Thomas J.O."/>
        </authorList>
    </citation>
    <scope>MUTAGENESIS OF LYS-3 AND LYS-12</scope>
</reference>
<comment type="function">
    <text evidence="1 3 4">Multifunctional redox sensitive protein with various roles in different cellular compartments. Nuclear functions are attributed to fully reduced HGMB1. Associates with chromatin and binds DNA with a preference to non-canonical DNA structures such as single-stranded DNA, DNA-containing cruciforms or bent structures, supercoiled DNA and ZDNA. Can bent DNA and enhance DNA flexibility by looping thus providing a mechanism to promote activities on various gene promoters. Can restructure the canonical nucleosome. Proposed to be an universal biosensor for nucleic acids. May promote inflammatory response to sterile and infectious signals and may be involved in the coordination and integration of innate and adaptive immune responses. In the cytoplasm may function as sensor and/or chaperone for immunogenic nucleic acids, and mediate autophagy. May act as danger associated molecular pattern (DAMP) molecule that amplifies immune responses during tissue injury.</text>
</comment>
<comment type="subcellular location">
    <subcellularLocation>
        <location evidence="5 10">Nucleus</location>
    </subcellularLocation>
    <subcellularLocation>
        <location evidence="10">Chromosome</location>
    </subcellularLocation>
    <subcellularLocation>
        <location evidence="9">Cytoplasm</location>
    </subcellularLocation>
    <subcellularLocation>
        <location evidence="9">Secreted</location>
    </subcellularLocation>
</comment>
<comment type="domain">
    <text evidence="1 4 8">The acidic C-terminal domain forms a flexible structure which can reversibly interact intramolecularily with the HMG boxes and modulate binding to DNA and other proteins; may involve Lys-3 and histone H3 'Lys-37' and 'Lys-38'.</text>
</comment>
<comment type="PTM">
    <text evidence="1">Reduction/oxidation of cysteine residues Cys-23, Cys-45 and Cys-106 and a possible intramolecular disulfide bond involving Cys-23 and Cys-45 give rise to different redox forms with specific functional activities: 1- fully reduced HMGB1 (HMGB1C23hC45hC106h), 2- disulfide HMGB1 (HMGB1C23-C45C106h) and 3- sulfonyl HMGB1 (HMGB1C23soC45soC106so).</text>
</comment>
<comment type="similarity">
    <text evidence="9">Belongs to the HMGB family.</text>
</comment>
<organism>
    <name type="scientific">Gallus gallus</name>
    <name type="common">Chicken</name>
    <dbReference type="NCBI Taxonomy" id="9031"/>
    <lineage>
        <taxon>Eukaryota</taxon>
        <taxon>Metazoa</taxon>
        <taxon>Chordata</taxon>
        <taxon>Craniata</taxon>
        <taxon>Vertebrata</taxon>
        <taxon>Euteleostomi</taxon>
        <taxon>Archelosauria</taxon>
        <taxon>Archosauria</taxon>
        <taxon>Dinosauria</taxon>
        <taxon>Saurischia</taxon>
        <taxon>Theropoda</taxon>
        <taxon>Coelurosauria</taxon>
        <taxon>Aves</taxon>
        <taxon>Neognathae</taxon>
        <taxon>Galloanserae</taxon>
        <taxon>Galliformes</taxon>
        <taxon>Phasianidae</taxon>
        <taxon>Phasianinae</taxon>
        <taxon>Gallus</taxon>
    </lineage>
</organism>
<keyword id="KW-0158">Chromosome</keyword>
<keyword id="KW-0963">Cytoplasm</keyword>
<keyword id="KW-1015">Disulfide bond</keyword>
<keyword id="KW-0238">DNA-binding</keyword>
<keyword id="KW-0391">Immunity</keyword>
<keyword id="KW-0395">Inflammatory response</keyword>
<keyword id="KW-0399">Innate immunity</keyword>
<keyword id="KW-0539">Nucleus</keyword>
<keyword id="KW-0558">Oxidation</keyword>
<keyword id="KW-1185">Reference proteome</keyword>
<keyword id="KW-0677">Repeat</keyword>
<keyword id="KW-0964">Secreted</keyword>
<evidence type="ECO:0000250" key="1">
    <source>
        <dbReference type="UniProtKB" id="P09429"/>
    </source>
</evidence>
<evidence type="ECO:0000250" key="2">
    <source>
        <dbReference type="UniProtKB" id="P10103"/>
    </source>
</evidence>
<evidence type="ECO:0000250" key="3">
    <source>
        <dbReference type="UniProtKB" id="P63158"/>
    </source>
</evidence>
<evidence type="ECO:0000250" key="4">
    <source>
        <dbReference type="UniProtKB" id="P63159"/>
    </source>
</evidence>
<evidence type="ECO:0000255" key="5">
    <source>
        <dbReference type="PROSITE-ProRule" id="PRU00267"/>
    </source>
</evidence>
<evidence type="ECO:0000256" key="6">
    <source>
        <dbReference type="SAM" id="MobiDB-lite"/>
    </source>
</evidence>
<evidence type="ECO:0000269" key="7">
    <source>
    </source>
</evidence>
<evidence type="ECO:0000269" key="8">
    <source>
    </source>
</evidence>
<evidence type="ECO:0000305" key="9"/>
<evidence type="ECO:0000305" key="10">
    <source>
    </source>
</evidence>